<protein>
    <recommendedName>
        <fullName>L-lactate dehydrogenase B chain</fullName>
        <shortName>LDH-B</shortName>
        <ecNumber evidence="2">1.1.1.27</ecNumber>
    </recommendedName>
</protein>
<name>LDHB_ALLMI</name>
<proteinExistence type="evidence at transcript level"/>
<comment type="function">
    <text evidence="2">Interconverts simultaneously and stereospecifically pyruvate and lactate with concomitant interconversion of NADH and NAD(+).</text>
</comment>
<comment type="catalytic activity">
    <reaction evidence="2">
        <text>(S)-lactate + NAD(+) = pyruvate + NADH + H(+)</text>
        <dbReference type="Rhea" id="RHEA:23444"/>
        <dbReference type="ChEBI" id="CHEBI:15361"/>
        <dbReference type="ChEBI" id="CHEBI:15378"/>
        <dbReference type="ChEBI" id="CHEBI:16651"/>
        <dbReference type="ChEBI" id="CHEBI:57540"/>
        <dbReference type="ChEBI" id="CHEBI:57945"/>
        <dbReference type="EC" id="1.1.1.27"/>
    </reaction>
    <physiologicalReaction direction="left-to-right" evidence="2">
        <dbReference type="Rhea" id="RHEA:23445"/>
    </physiologicalReaction>
    <physiologicalReaction direction="right-to-left" evidence="2">
        <dbReference type="Rhea" id="RHEA:23446"/>
    </physiologicalReaction>
</comment>
<comment type="pathway">
    <text evidence="2">Fermentation; pyruvate fermentation to lactate; (S)-lactate from pyruvate: step 1/1.</text>
</comment>
<comment type="subunit">
    <text evidence="1">Homotetramer.</text>
</comment>
<comment type="subcellular location">
    <subcellularLocation>
        <location evidence="1">Cytoplasm</location>
    </subcellularLocation>
</comment>
<comment type="similarity">
    <text evidence="3">Belongs to the LDH/MDH superfamily. LDH family.</text>
</comment>
<organism>
    <name type="scientific">Alligator mississippiensis</name>
    <name type="common">American alligator</name>
    <dbReference type="NCBI Taxonomy" id="8496"/>
    <lineage>
        <taxon>Eukaryota</taxon>
        <taxon>Metazoa</taxon>
        <taxon>Chordata</taxon>
        <taxon>Craniata</taxon>
        <taxon>Vertebrata</taxon>
        <taxon>Euteleostomi</taxon>
        <taxon>Archelosauria</taxon>
        <taxon>Archosauria</taxon>
        <taxon>Crocodylia</taxon>
        <taxon>Alligatoridae</taxon>
        <taxon>Alligatorinae</taxon>
        <taxon>Alligator</taxon>
    </lineage>
</organism>
<accession>Q9PW05</accession>
<reference key="1">
    <citation type="journal article" date="1997" name="Mol. Biol. Evol.">
        <title>The cDNA cloning and molecular evolution of reptile and pigeon lactate dehydrogenase isozymes.</title>
        <authorList>
            <person name="Mannen H."/>
            <person name="Tsoi S.C.-M."/>
            <person name="Krushkal J.S."/>
            <person name="Li W.-H."/>
            <person name="Li S.S.-L."/>
        </authorList>
    </citation>
    <scope>NUCLEOTIDE SEQUENCE [MRNA]</scope>
    <source>
        <tissue>Oviduct</tissue>
    </source>
</reference>
<dbReference type="EC" id="1.1.1.27" evidence="2"/>
<dbReference type="EMBL" id="L79952">
    <property type="protein sequence ID" value="AAD46978.1"/>
    <property type="molecule type" value="mRNA"/>
</dbReference>
<dbReference type="RefSeq" id="NP_001274216.1">
    <property type="nucleotide sequence ID" value="NM_001287287.1"/>
</dbReference>
<dbReference type="SMR" id="Q9PW05"/>
<dbReference type="GeneID" id="102573484"/>
<dbReference type="KEGG" id="amj:102573484"/>
<dbReference type="CTD" id="3945"/>
<dbReference type="eggNOG" id="KOG1495">
    <property type="taxonomic scope" value="Eukaryota"/>
</dbReference>
<dbReference type="OrthoDB" id="5405561at2759"/>
<dbReference type="UniPathway" id="UPA00554">
    <property type="reaction ID" value="UER00611"/>
</dbReference>
<dbReference type="GO" id="GO:0005737">
    <property type="term" value="C:cytoplasm"/>
    <property type="evidence" value="ECO:0007669"/>
    <property type="project" value="UniProtKB-SubCell"/>
</dbReference>
<dbReference type="GO" id="GO:0004459">
    <property type="term" value="F:L-lactate dehydrogenase activity"/>
    <property type="evidence" value="ECO:0007669"/>
    <property type="project" value="UniProtKB-EC"/>
</dbReference>
<dbReference type="GO" id="GO:0006089">
    <property type="term" value="P:lactate metabolic process"/>
    <property type="evidence" value="ECO:0007669"/>
    <property type="project" value="TreeGrafter"/>
</dbReference>
<dbReference type="CDD" id="cd05293">
    <property type="entry name" value="LDH_1"/>
    <property type="match status" value="1"/>
</dbReference>
<dbReference type="FunFam" id="3.40.50.720:FF:000029">
    <property type="entry name" value="L-lactate dehydrogenase A chain"/>
    <property type="match status" value="1"/>
</dbReference>
<dbReference type="FunFam" id="3.90.110.10:FF:000003">
    <property type="entry name" value="L-lactate dehydrogenase A chain"/>
    <property type="match status" value="1"/>
</dbReference>
<dbReference type="Gene3D" id="3.90.110.10">
    <property type="entry name" value="Lactate dehydrogenase/glycoside hydrolase, family 4, C-terminal"/>
    <property type="match status" value="1"/>
</dbReference>
<dbReference type="Gene3D" id="3.40.50.720">
    <property type="entry name" value="NAD(P)-binding Rossmann-like Domain"/>
    <property type="match status" value="1"/>
</dbReference>
<dbReference type="HAMAP" id="MF_00488">
    <property type="entry name" value="Lactate_dehydrog"/>
    <property type="match status" value="1"/>
</dbReference>
<dbReference type="InterPro" id="IPR001557">
    <property type="entry name" value="L-lactate/malate_DH"/>
</dbReference>
<dbReference type="InterPro" id="IPR011304">
    <property type="entry name" value="L-lactate_DH"/>
</dbReference>
<dbReference type="InterPro" id="IPR018177">
    <property type="entry name" value="L-lactate_DH_AS"/>
</dbReference>
<dbReference type="InterPro" id="IPR022383">
    <property type="entry name" value="Lactate/malate_DH_C"/>
</dbReference>
<dbReference type="InterPro" id="IPR001236">
    <property type="entry name" value="Lactate/malate_DH_N"/>
</dbReference>
<dbReference type="InterPro" id="IPR015955">
    <property type="entry name" value="Lactate_DH/Glyco_Ohase_4_C"/>
</dbReference>
<dbReference type="InterPro" id="IPR036291">
    <property type="entry name" value="NAD(P)-bd_dom_sf"/>
</dbReference>
<dbReference type="NCBIfam" id="TIGR01771">
    <property type="entry name" value="L-LDH-NAD"/>
    <property type="match status" value="1"/>
</dbReference>
<dbReference type="PANTHER" id="PTHR43128">
    <property type="entry name" value="L-2-HYDROXYCARBOXYLATE DEHYDROGENASE (NAD(P)(+))"/>
    <property type="match status" value="1"/>
</dbReference>
<dbReference type="PANTHER" id="PTHR43128:SF2">
    <property type="entry name" value="L-LACTATE DEHYDROGENASE B CHAIN"/>
    <property type="match status" value="1"/>
</dbReference>
<dbReference type="Pfam" id="PF02866">
    <property type="entry name" value="Ldh_1_C"/>
    <property type="match status" value="1"/>
</dbReference>
<dbReference type="Pfam" id="PF00056">
    <property type="entry name" value="Ldh_1_N"/>
    <property type="match status" value="1"/>
</dbReference>
<dbReference type="PIRSF" id="PIRSF000102">
    <property type="entry name" value="Lac_mal_DH"/>
    <property type="match status" value="1"/>
</dbReference>
<dbReference type="PRINTS" id="PR00086">
    <property type="entry name" value="LLDHDRGNASE"/>
</dbReference>
<dbReference type="SUPFAM" id="SSF56327">
    <property type="entry name" value="LDH C-terminal domain-like"/>
    <property type="match status" value="1"/>
</dbReference>
<dbReference type="SUPFAM" id="SSF51735">
    <property type="entry name" value="NAD(P)-binding Rossmann-fold domains"/>
    <property type="match status" value="1"/>
</dbReference>
<dbReference type="PROSITE" id="PS00064">
    <property type="entry name" value="L_LDH"/>
    <property type="match status" value="1"/>
</dbReference>
<sequence>MSTLKEKLITQIASERTIPNSKVTVVGVGQVGMACAISILGKRLGDELALVDVWEDKLKGEMMDLQHGSLFLQTHKIVADKDYAVTANSKIVVVTAGVRQQEGESRLNLVQRNVNVFKFIIPQIIKYSPDCTILVVSNPVDILTYVTWKLSGLPKHRVIGSGCNLDSARFRYLMSEKLGIHPSSCHGWILGEHGDSSVAVWSGVNVAGVSLQELNPAMGTDRDSEKWKEVHKQVVESAYEVIKLKGYTNWAIGLSVADLLETMMKNLCRVHPVSTMVKGMYGIENEVFLSLPCVLSASGLTSVINQKLKDDEVAQLRSSADTLWSIQKDLKDL</sequence>
<gene>
    <name type="primary">LDHB</name>
</gene>
<feature type="initiator methionine" description="Removed" evidence="1">
    <location>
        <position position="1"/>
    </location>
</feature>
<feature type="chain" id="PRO_0000168468" description="L-lactate dehydrogenase B chain">
    <location>
        <begin position="2"/>
        <end position="333"/>
    </location>
</feature>
<feature type="active site" description="Proton acceptor" evidence="1">
    <location>
        <position position="193"/>
    </location>
</feature>
<feature type="binding site" evidence="1">
    <location>
        <begin position="29"/>
        <end position="57"/>
    </location>
    <ligand>
        <name>NAD(+)</name>
        <dbReference type="ChEBI" id="CHEBI:57540"/>
    </ligand>
</feature>
<feature type="binding site" evidence="1">
    <location>
        <position position="99"/>
    </location>
    <ligand>
        <name>NAD(+)</name>
        <dbReference type="ChEBI" id="CHEBI:57540"/>
    </ligand>
</feature>
<feature type="binding site" evidence="1">
    <location>
        <position position="106"/>
    </location>
    <ligand>
        <name>substrate</name>
    </ligand>
</feature>
<feature type="binding site" evidence="1">
    <location>
        <position position="138"/>
    </location>
    <ligand>
        <name>NAD(+)</name>
        <dbReference type="ChEBI" id="CHEBI:57540"/>
    </ligand>
</feature>
<feature type="binding site" evidence="1">
    <location>
        <position position="138"/>
    </location>
    <ligand>
        <name>substrate</name>
    </ligand>
</feature>
<feature type="binding site" evidence="1">
    <location>
        <position position="169"/>
    </location>
    <ligand>
        <name>substrate</name>
    </ligand>
</feature>
<feature type="binding site" evidence="1">
    <location>
        <position position="248"/>
    </location>
    <ligand>
        <name>substrate</name>
    </ligand>
</feature>
<evidence type="ECO:0000250" key="1"/>
<evidence type="ECO:0000250" key="2">
    <source>
        <dbReference type="UniProtKB" id="P07195"/>
    </source>
</evidence>
<evidence type="ECO:0000305" key="3"/>
<keyword id="KW-0963">Cytoplasm</keyword>
<keyword id="KW-0520">NAD</keyword>
<keyword id="KW-0560">Oxidoreductase</keyword>